<name>PRKC_BACSU</name>
<feature type="chain" id="PRO_0000171183" description="Serine/threonine-protein kinase PrkC">
    <location>
        <begin position="1"/>
        <end position="648"/>
    </location>
</feature>
<feature type="topological domain" description="Cytoplasmic" evidence="11">
    <location>
        <begin position="1"/>
        <end position="330"/>
    </location>
</feature>
<feature type="transmembrane region" description="Helical" evidence="1">
    <location>
        <begin position="331"/>
        <end position="351"/>
    </location>
</feature>
<feature type="topological domain" description="Extracellular" evidence="11">
    <location>
        <begin position="352"/>
        <end position="648"/>
    </location>
</feature>
<feature type="domain" description="Protein kinase" evidence="2 6">
    <location>
        <begin position="11"/>
        <end position="271"/>
    </location>
</feature>
<feature type="domain" description="PASTA 1" evidence="3">
    <location>
        <begin position="356"/>
        <end position="424"/>
    </location>
</feature>
<feature type="domain" description="PASTA 2" evidence="3">
    <location>
        <begin position="425"/>
        <end position="492"/>
    </location>
</feature>
<feature type="domain" description="PASTA 3" evidence="3">
    <location>
        <begin position="493"/>
        <end position="559"/>
    </location>
</feature>
<feature type="active site" description="Proton acceptor" evidence="2 4">
    <location>
        <position position="134"/>
    </location>
</feature>
<feature type="binding site" evidence="11">
    <location>
        <begin position="17"/>
        <end position="25"/>
    </location>
    <ligand>
        <name>ATP</name>
        <dbReference type="ChEBI" id="CHEBI:30616"/>
    </ligand>
</feature>
<feature type="binding site" evidence="2">
    <location>
        <position position="40"/>
    </location>
    <ligand>
        <name>ATP</name>
        <dbReference type="ChEBI" id="CHEBI:30616"/>
    </ligand>
</feature>
<feature type="site" description="Required for activity">
    <location>
        <position position="40"/>
    </location>
</feature>
<feature type="modified residue" description="Phosphothreonine; by autocatalysis" evidence="7">
    <location>
        <position position="162"/>
    </location>
</feature>
<feature type="modified residue" description="Phosphothreonine; by autocatalysis" evidence="7">
    <location>
        <position position="163"/>
    </location>
</feature>
<feature type="modified residue" description="Phosphothreonine; by autocatalysis" evidence="7">
    <location>
        <position position="165"/>
    </location>
</feature>
<feature type="modified residue" description="Phosphothreonine; by autocatalysis" evidence="7">
    <location>
        <position position="167"/>
    </location>
</feature>
<feature type="modified residue" description="Phosphoserine; by autocatalysis" evidence="7">
    <location>
        <position position="214"/>
    </location>
</feature>
<feature type="modified residue" description="Phosphothreonine; by autocatalysis" evidence="7 8">
    <location>
        <position position="290"/>
    </location>
</feature>
<feature type="modified residue" description="Phosphothreonine; by autocatalysis" evidence="7">
    <location>
        <position position="313"/>
    </location>
</feature>
<feature type="modified residue" description="Phosphothreonine; by autocatalysis" evidence="7">
    <location>
        <position position="320"/>
    </location>
</feature>
<feature type="mutagenesis site" description="Does not support germination in response to peptidoglycan." evidence="6 9">
    <original>K</original>
    <variation>A</variation>
    <location>
        <position position="40"/>
    </location>
</feature>
<feature type="mutagenesis site" description="Abolishes autophosphorylation and decreases spore production and biofilm formation. No phosphorylation of YezB." evidence="6 9 10">
    <original>K</original>
    <variation>R</variation>
    <location>
        <position position="40"/>
    </location>
</feature>
<feature type="mutagenesis site" description="4-fold reduction in activity. Abolished activity; when associated with A-163; A-165 and A-167." evidence="7">
    <original>T</original>
    <variation>A</variation>
    <location>
        <position position="162"/>
    </location>
</feature>
<feature type="mutagenesis site" description="4-fold reduction in activity. Abolished activity; when associated with A-162; A-165 and A-167." evidence="7">
    <original>T</original>
    <variation>A</variation>
    <location>
        <position position="163"/>
    </location>
</feature>
<feature type="mutagenesis site" description="4-fold reduction in activity. Abolished activity; when associated with A-162; A-163 and A-167." evidence="7">
    <original>T</original>
    <variation>A</variation>
    <location>
        <position position="165"/>
    </location>
</feature>
<feature type="mutagenesis site" description="4-fold reduction in activity. Abolished activity; when associated with A-162; A-163 and A-165." evidence="7">
    <original>T</original>
    <variation>A</variation>
    <location>
        <position position="167"/>
    </location>
</feature>
<feature type="mutagenesis site" description="4-fold reduction in activity." evidence="7">
    <original>S</original>
    <variation>A</variation>
    <location>
        <position position="214"/>
    </location>
</feature>
<feature type="mutagenesis site" description="Slightly reduced activity." evidence="7">
    <original>T</original>
    <variation>A</variation>
    <location>
        <position position="290"/>
    </location>
</feature>
<feature type="mutagenesis site" description="Unchanged activity." evidence="7">
    <original>T</original>
    <variation>A</variation>
    <location>
        <position position="313"/>
    </location>
</feature>
<feature type="mutagenesis site" description="2-fold reduction in activity." evidence="7">
    <original>T</original>
    <variation>A</variation>
    <location>
        <position position="320"/>
    </location>
</feature>
<organism>
    <name type="scientific">Bacillus subtilis (strain 168)</name>
    <dbReference type="NCBI Taxonomy" id="224308"/>
    <lineage>
        <taxon>Bacteria</taxon>
        <taxon>Bacillati</taxon>
        <taxon>Bacillota</taxon>
        <taxon>Bacilli</taxon>
        <taxon>Bacillales</taxon>
        <taxon>Bacillaceae</taxon>
        <taxon>Bacillus</taxon>
    </lineage>
</organism>
<keyword id="KW-0067">ATP-binding</keyword>
<keyword id="KW-0309">Germination</keyword>
<keyword id="KW-0418">Kinase</keyword>
<keyword id="KW-0472">Membrane</keyword>
<keyword id="KW-0547">Nucleotide-binding</keyword>
<keyword id="KW-0597">Phosphoprotein</keyword>
<keyword id="KW-1185">Reference proteome</keyword>
<keyword id="KW-0677">Repeat</keyword>
<keyword id="KW-0723">Serine/threonine-protein kinase</keyword>
<keyword id="KW-0735">Signal-anchor</keyword>
<keyword id="KW-0808">Transferase</keyword>
<keyword id="KW-0812">Transmembrane</keyword>
<keyword id="KW-1133">Transmembrane helix</keyword>
<accession>O34507</accession>
<sequence>MLIGKRISGRYQILRVIGGGGMANVYLAEDIILDREVAIKILRFDYANDNEFIRRFRREAQSASSLDHPNIVSIYDLGEEDDIYYIVMEYVEGMTLKEYITANGPLHPKEALNIMEQIVSAIAHAHQNQIVHRDIKPHNILIDHMGNIKVTDFGIATALSSTTITHTNSVLGSVHYLSPEQARGGLATKKSDIYALGIVLFELLTGRIPFDGESAVSIALKHLQAETPSAKRWNPSVPQSVENIILKATAKDPFHRYETAEDMEADIKTAFDADRLNEKRFTIQEDEEMTKAIPIIKDEELAKAAGEKEAEVTTAQENKTKKNGKRKKWPWVLLTICLVFITAGILAVTVFPSLFMPKDVKIPDVSGMEYEKAAGLLEKEGLQVDSEVLEISDEKIEEGLMVKTDPKADTTVKEGATVTLYKSTGKAKTEIGDVTGQTVDQAKKALKDQGFNHVTVNEVNDEKNAGTVIDQNPSAGTELVPSEDQVKLTVSIGPEDITLRDLKTYSKEAASGYLEDNGLKLVEKEAYSDDVPEGQVVKQKPAAGTAVKPGNEVEVTFSLGPEKKPAKTVKEKVKIPYEPENEGDELQVQIAVDDADHSISDTYEEFKIKEPTERTIELKIEPGQKGYYQVMVNNKVVSYKTIEYPKDE</sequence>
<gene>
    <name type="primary">prkC</name>
    <name type="synonym">yloP</name>
    <name type="ordered locus">BSU15770</name>
</gene>
<protein>
    <recommendedName>
        <fullName>Serine/threonine-protein kinase PrkC</fullName>
        <shortName>Ser/Thr-protein kinase PrkC</shortName>
        <ecNumber>2.7.11.1</ecNumber>
    </recommendedName>
</protein>
<reference key="1">
    <citation type="submission" date="1997-08" db="EMBL/GenBank/DDBJ databases">
        <title>DNA sequence of a 28 Kbp seqment of DNA from the spoVM region of Bacillus subtilis.</title>
        <authorList>
            <person name="Foulger D."/>
            <person name="Errington J."/>
        </authorList>
    </citation>
    <scope>NUCLEOTIDE SEQUENCE [GENOMIC DNA]</scope>
    <source>
        <strain>168</strain>
    </source>
</reference>
<reference key="2">
    <citation type="journal article" date="1997" name="Nature">
        <title>The complete genome sequence of the Gram-positive bacterium Bacillus subtilis.</title>
        <authorList>
            <person name="Kunst F."/>
            <person name="Ogasawara N."/>
            <person name="Moszer I."/>
            <person name="Albertini A.M."/>
            <person name="Alloni G."/>
            <person name="Azevedo V."/>
            <person name="Bertero M.G."/>
            <person name="Bessieres P."/>
            <person name="Bolotin A."/>
            <person name="Borchert S."/>
            <person name="Borriss R."/>
            <person name="Boursier L."/>
            <person name="Brans A."/>
            <person name="Braun M."/>
            <person name="Brignell S.C."/>
            <person name="Bron S."/>
            <person name="Brouillet S."/>
            <person name="Bruschi C.V."/>
            <person name="Caldwell B."/>
            <person name="Capuano V."/>
            <person name="Carter N.M."/>
            <person name="Choi S.-K."/>
            <person name="Codani J.-J."/>
            <person name="Connerton I.F."/>
            <person name="Cummings N.J."/>
            <person name="Daniel R.A."/>
            <person name="Denizot F."/>
            <person name="Devine K.M."/>
            <person name="Duesterhoeft A."/>
            <person name="Ehrlich S.D."/>
            <person name="Emmerson P.T."/>
            <person name="Entian K.-D."/>
            <person name="Errington J."/>
            <person name="Fabret C."/>
            <person name="Ferrari E."/>
            <person name="Foulger D."/>
            <person name="Fritz C."/>
            <person name="Fujita M."/>
            <person name="Fujita Y."/>
            <person name="Fuma S."/>
            <person name="Galizzi A."/>
            <person name="Galleron N."/>
            <person name="Ghim S.-Y."/>
            <person name="Glaser P."/>
            <person name="Goffeau A."/>
            <person name="Golightly E.J."/>
            <person name="Grandi G."/>
            <person name="Guiseppi G."/>
            <person name="Guy B.J."/>
            <person name="Haga K."/>
            <person name="Haiech J."/>
            <person name="Harwood C.R."/>
            <person name="Henaut A."/>
            <person name="Hilbert H."/>
            <person name="Holsappel S."/>
            <person name="Hosono S."/>
            <person name="Hullo M.-F."/>
            <person name="Itaya M."/>
            <person name="Jones L.-M."/>
            <person name="Joris B."/>
            <person name="Karamata D."/>
            <person name="Kasahara Y."/>
            <person name="Klaerr-Blanchard M."/>
            <person name="Klein C."/>
            <person name="Kobayashi Y."/>
            <person name="Koetter P."/>
            <person name="Koningstein G."/>
            <person name="Krogh S."/>
            <person name="Kumano M."/>
            <person name="Kurita K."/>
            <person name="Lapidus A."/>
            <person name="Lardinois S."/>
            <person name="Lauber J."/>
            <person name="Lazarevic V."/>
            <person name="Lee S.-M."/>
            <person name="Levine A."/>
            <person name="Liu H."/>
            <person name="Masuda S."/>
            <person name="Mauel C."/>
            <person name="Medigue C."/>
            <person name="Medina N."/>
            <person name="Mellado R.P."/>
            <person name="Mizuno M."/>
            <person name="Moestl D."/>
            <person name="Nakai S."/>
            <person name="Noback M."/>
            <person name="Noone D."/>
            <person name="O'Reilly M."/>
            <person name="Ogawa K."/>
            <person name="Ogiwara A."/>
            <person name="Oudega B."/>
            <person name="Park S.-H."/>
            <person name="Parro V."/>
            <person name="Pohl T.M."/>
            <person name="Portetelle D."/>
            <person name="Porwollik S."/>
            <person name="Prescott A.M."/>
            <person name="Presecan E."/>
            <person name="Pujic P."/>
            <person name="Purnelle B."/>
            <person name="Rapoport G."/>
            <person name="Rey M."/>
            <person name="Reynolds S."/>
            <person name="Rieger M."/>
            <person name="Rivolta C."/>
            <person name="Rocha E."/>
            <person name="Roche B."/>
            <person name="Rose M."/>
            <person name="Sadaie Y."/>
            <person name="Sato T."/>
            <person name="Scanlan E."/>
            <person name="Schleich S."/>
            <person name="Schroeter R."/>
            <person name="Scoffone F."/>
            <person name="Sekiguchi J."/>
            <person name="Sekowska A."/>
            <person name="Seror S.J."/>
            <person name="Serror P."/>
            <person name="Shin B.-S."/>
            <person name="Soldo B."/>
            <person name="Sorokin A."/>
            <person name="Tacconi E."/>
            <person name="Takagi T."/>
            <person name="Takahashi H."/>
            <person name="Takemaru K."/>
            <person name="Takeuchi M."/>
            <person name="Tamakoshi A."/>
            <person name="Tanaka T."/>
            <person name="Terpstra P."/>
            <person name="Tognoni A."/>
            <person name="Tosato V."/>
            <person name="Uchiyama S."/>
            <person name="Vandenbol M."/>
            <person name="Vannier F."/>
            <person name="Vassarotti A."/>
            <person name="Viari A."/>
            <person name="Wambutt R."/>
            <person name="Wedler E."/>
            <person name="Wedler H."/>
            <person name="Weitzenegger T."/>
            <person name="Winters P."/>
            <person name="Wipat A."/>
            <person name="Yamamoto H."/>
            <person name="Yamane K."/>
            <person name="Yasumoto K."/>
            <person name="Yata K."/>
            <person name="Yoshida K."/>
            <person name="Yoshikawa H.-F."/>
            <person name="Zumstein E."/>
            <person name="Yoshikawa H."/>
            <person name="Danchin A."/>
        </authorList>
    </citation>
    <scope>NUCLEOTIDE SEQUENCE [LARGE SCALE GENOMIC DNA]</scope>
    <source>
        <strain>168</strain>
    </source>
</reference>
<reference key="3">
    <citation type="journal article" date="2002" name="J. Bacteriol.">
        <title>The PrpC serine-threonine phosphatase and PrkC kinase have opposing physiological roles in stationary-phase Bacillus subtilis cells.</title>
        <authorList>
            <person name="Gaidenko T.A."/>
            <person name="Kim T.-J."/>
            <person name="Price C.W."/>
        </authorList>
    </citation>
    <scope>FUNCTION</scope>
    <source>
        <strain>168 / Marburg / ATCC 6051 / DSM 10 / JCM 1465 / NBRC 13719 / NCIMB 3610 / NRRL NRS-744 / VKM B-501</strain>
    </source>
</reference>
<reference key="4">
    <citation type="journal article" date="2002" name="Mol. Microbiol.">
        <title>Characterization of a membrane-linked Ser/Thr protein kinase in Bacillus subtilis, implicated in developmental processes.</title>
        <authorList>
            <person name="Madec E."/>
            <person name="Laszkiewicz A."/>
            <person name="Iwanicki A."/>
            <person name="Obuchowski M."/>
            <person name="Seror S."/>
        </authorList>
    </citation>
    <scope>FUNCTION</scope>
    <scope>SUBUNIT</scope>
    <scope>DOMAIN</scope>
    <scope>PHOSPHORYLATION</scope>
    <scope>MUTAGENESIS OF LYS-40</scope>
    <source>
        <strain>168</strain>
    </source>
</reference>
<reference key="5">
    <citation type="journal article" date="2003" name="J. Mol. Biol.">
        <title>Mass spectrometry and site-directed mutagenesis identify several autophosphorylated residues required for the activity of PrkC, a Ser/Thr kinase from Bacillus subtilis.</title>
        <authorList>
            <person name="Madec E."/>
            <person name="Stensballe A."/>
            <person name="Kjellstrom S."/>
            <person name="Cladiere L."/>
            <person name="Obuchowski M."/>
            <person name="Jensen O.N."/>
            <person name="Seror S.J."/>
        </authorList>
    </citation>
    <scope>PHOSPHORYLATION AT THR-162; THR-163; THR-165; THR-167; SER-214; THR-290; THR-313 AND THR-320</scope>
    <scope>MUTAGENESIS OF THR-162; THR-163; THR-165; THR-167; SER-214; THR-290; THR-313 AND THR-320</scope>
    <scope>IDENTIFICATION BY MASS SPECTROMETRY</scope>
</reference>
<reference key="6">
    <citation type="journal article" date="2007" name="Mol. Cell. Proteomics">
        <title>The serine/threonine/tyrosine phosphoproteome of the model bacterium Bacillus subtilis.</title>
        <authorList>
            <person name="Macek B."/>
            <person name="Mijakovic I."/>
            <person name="Olsen J.V."/>
            <person name="Gnad F."/>
            <person name="Kumar C."/>
            <person name="Jensen P.R."/>
            <person name="Mann M."/>
        </authorList>
    </citation>
    <scope>PHOSPHORYLATION [LARGE SCALE ANALYSIS] AT THR-290</scope>
    <scope>IDENTIFICATION BY MASS SPECTROMETRY</scope>
    <source>
        <strain>168</strain>
    </source>
</reference>
<reference key="7">
    <citation type="journal article" date="2008" name="Cell">
        <title>A eukaryotic-like Ser/Thr kinase signals bacteria to exit dormancy in response to peptidoglycan fragments.</title>
        <authorList>
            <person name="Shah I.M."/>
            <person name="Laaberki M.H."/>
            <person name="Popham D.L."/>
            <person name="Dworkin J."/>
        </authorList>
    </citation>
    <scope>FUNCTION IN PEPTIDOGLYCAN-DEPENDENT GERMINATION</scope>
    <scope>DISRUPTION PHENOTYPE</scope>
    <scope>PEPTIDOGLYCAN-BINDING</scope>
    <scope>SUBCELLULAR LOCATION</scope>
    <scope>MUTAGENESIS OF LYS-40</scope>
    <source>
        <strain>168 / PY79</strain>
    </source>
</reference>
<reference key="8">
    <citation type="journal article" date="2008" name="QSAR Comb. Sci.">
        <title>Theoretical modeling of PrkCc, serine-threonine protein kinase intracellular domain, complexed with ATP derivatives.</title>
        <authorList>
            <person name="Gruszczyski P."/>
            <person name="Kamierkiewicz R."/>
            <person name="Obuchowski M."/>
            <person name="Lammek B."/>
        </authorList>
    </citation>
    <scope>3D-STRUCTURE MODELING OF 6-269 IN COMPLEX WITH ATP ANALOGS</scope>
</reference>
<reference key="9">
    <citation type="journal article" date="2009" name="Microbiology">
        <title>CpgA, EF-Tu and the stressosome protein YezB are substrates of the Ser/Thr kinase/phosphatase couple, PrkC/PrpC, in Bacillus subtilis.</title>
        <authorList>
            <person name="Absalon C."/>
            <person name="Obuchowski M."/>
            <person name="Madec E."/>
            <person name="Delattre D."/>
            <person name="Holland I.B."/>
            <person name="Seror S.J."/>
        </authorList>
    </citation>
    <scope>FUNCTION</scope>
    <scope>SUBSTRATE SPECIFICITY</scope>
    <scope>ACTIVITY REGULATION</scope>
    <scope>MUTAGENESIS OF LYS-40</scope>
    <source>
        <strain>168</strain>
    </source>
</reference>
<reference key="10">
    <citation type="journal article" date="2010" name="J. Comput. Aided Mol. Des.">
        <title>Phosphorylation and ATP-binding induced conformational changes in the PrkC, Ser/Thr kinase from B. subtilis.</title>
        <authorList>
            <person name="Gruszczynski P."/>
            <person name="Obuchowski M."/>
            <person name="Kazmierkiewicz R."/>
        </authorList>
    </citation>
    <scope>3D-STRUCTURE MODELING OF CATALYTIC DOMAIN</scope>
</reference>
<comment type="function">
    <text evidence="5 6 9 10">Protein kinase that is responsible for triggering spore germination in response to muropeptides, signaling bacteria to exit dormancy. PrkC is thus a germination receptor that binds peptidoglycan fragments containing m-Dpm (meso-diaminopimelate), which act as spore germinants. Autophosphorylates and phosphorylates EF-G (elongation factor G, fusA); the latter modification is likely necessary for germination in response to peptidoglycan (PubMed:12399479). Another group did not detect phosphorylation of EF-G (PubMed:19246764). PrkC is a substrate in vitro of the cotranscribed phosphatase PrpC, which suggests that they form a functional couple in vivo. Might also be involved in sporulation and biofilm formation. Does not seem to be involved in stress response.</text>
</comment>
<comment type="catalytic activity">
    <reaction>
        <text>L-seryl-[protein] + ATP = O-phospho-L-seryl-[protein] + ADP + H(+)</text>
        <dbReference type="Rhea" id="RHEA:17989"/>
        <dbReference type="Rhea" id="RHEA-COMP:9863"/>
        <dbReference type="Rhea" id="RHEA-COMP:11604"/>
        <dbReference type="ChEBI" id="CHEBI:15378"/>
        <dbReference type="ChEBI" id="CHEBI:29999"/>
        <dbReference type="ChEBI" id="CHEBI:30616"/>
        <dbReference type="ChEBI" id="CHEBI:83421"/>
        <dbReference type="ChEBI" id="CHEBI:456216"/>
        <dbReference type="EC" id="2.7.11.1"/>
    </reaction>
</comment>
<comment type="catalytic activity">
    <reaction>
        <text>L-threonyl-[protein] + ATP = O-phospho-L-threonyl-[protein] + ADP + H(+)</text>
        <dbReference type="Rhea" id="RHEA:46608"/>
        <dbReference type="Rhea" id="RHEA-COMP:11060"/>
        <dbReference type="Rhea" id="RHEA-COMP:11605"/>
        <dbReference type="ChEBI" id="CHEBI:15378"/>
        <dbReference type="ChEBI" id="CHEBI:30013"/>
        <dbReference type="ChEBI" id="CHEBI:30616"/>
        <dbReference type="ChEBI" id="CHEBI:61977"/>
        <dbReference type="ChEBI" id="CHEBI:456216"/>
        <dbReference type="EC" id="2.7.11.1"/>
    </reaction>
</comment>
<comment type="activity regulation">
    <text evidence="10">Bryostatin activates PrkC activity and induces germination, whereas staurosporine inhibits PrkC and significantly reduced peptidoglycan-dependent germination. Kinase activity of isolated N-terminus stimulated by poly-L-lysine or myelin basic protein (PubMed:19246764).</text>
</comment>
<comment type="subunit">
    <text evidence="6">Homodimer.</text>
</comment>
<comment type="interaction">
    <interactant intactId="EBI-6667154">
        <id>O34507</id>
    </interactant>
    <interactant intactId="EBI-9303331">
        <id>P37562</id>
        <label>yabT</label>
    </interactant>
    <organismsDiffer>false</organismsDiffer>
    <experiments>2</experiments>
</comment>
<comment type="interaction">
    <interactant intactId="EBI-6667154">
        <id>O34507</id>
    </interactant>
    <interactant intactId="EBI-5255200">
        <id>O31435</id>
        <label>ybdM</label>
    </interactant>
    <organismsDiffer>false</organismsDiffer>
    <experiments>3</experiments>
</comment>
<comment type="interaction">
    <interactant intactId="EBI-6667154">
        <id>O34507</id>
    </interactant>
    <interactant intactId="EBI-9302929">
        <id>P96716</id>
        <label>ywqD</label>
    </interactant>
    <organismsDiffer>false</organismsDiffer>
    <experiments>2</experiments>
</comment>
<comment type="subcellular location">
    <subcellularLocation>
        <location evidence="9">Spore membrane</location>
        <topology evidence="9">Single-pass type II membrane protein</topology>
    </subcellularLocation>
    <text>Is associated with the inner membrane of the spore.</text>
</comment>
<comment type="domain">
    <text evidence="6">The cytoplasmic domain has Ser/Thr kinase activity (PubMed:12406230). The C-terminal extracellular domain containing the PASTA repeats binds peptidoglycan.</text>
</comment>
<comment type="PTM">
    <text evidence="6 7 8">Autophosphorylation on threonine residue(s) and serine residue considerably increases the kinase activity of the protein. Dephosphorylated in vitro by PrpC.</text>
</comment>
<comment type="disruption phenotype">
    <text evidence="9">Spores lacking this gene fail to germinate in the presence of peptidoglycan fragments or purified GlcNAc-MurNAc tripeptides and tetrapeptides. They still respond to the nutrient germinant L-alanine and to the chemical germinant Ca(2+)-dipicolinic acid, indicating that the spores are still capable of germinating and that PrkC is not involved in nutrient or chemical germination.</text>
</comment>
<comment type="miscellaneous">
    <text>PubMed:18984160 shows that peptidoglycan fragments serve as a novel mechanism of interspecies bacterial signaling that likely indicates the presence of growing bacteria and thus serve as a signal for dormant cells that growth-promoting conditions exist.</text>
</comment>
<comment type="similarity">
    <text evidence="2">Belongs to the protein kinase superfamily. Ser/Thr protein kinase family.</text>
</comment>
<dbReference type="EC" id="2.7.11.1"/>
<dbReference type="EMBL" id="Y13937">
    <property type="protein sequence ID" value="CAA74267.1"/>
    <property type="molecule type" value="Genomic_DNA"/>
</dbReference>
<dbReference type="EMBL" id="AL009126">
    <property type="protein sequence ID" value="CAB13450.1"/>
    <property type="molecule type" value="Genomic_DNA"/>
</dbReference>
<dbReference type="PIR" id="H69878">
    <property type="entry name" value="H69878"/>
</dbReference>
<dbReference type="RefSeq" id="NP_389459.1">
    <property type="nucleotide sequence ID" value="NC_000964.3"/>
</dbReference>
<dbReference type="RefSeq" id="WP_003232062.1">
    <property type="nucleotide sequence ID" value="NZ_OZ025638.1"/>
</dbReference>
<dbReference type="SMR" id="O34507"/>
<dbReference type="FunCoup" id="O34507">
    <property type="interactions" value="45"/>
</dbReference>
<dbReference type="IntAct" id="O34507">
    <property type="interactions" value="8"/>
</dbReference>
<dbReference type="STRING" id="224308.BSU15770"/>
<dbReference type="iPTMnet" id="O34507"/>
<dbReference type="jPOST" id="O34507"/>
<dbReference type="PaxDb" id="224308-BSU15770"/>
<dbReference type="EnsemblBacteria" id="CAB13450">
    <property type="protein sequence ID" value="CAB13450"/>
    <property type="gene ID" value="BSU_15770"/>
</dbReference>
<dbReference type="GeneID" id="936132"/>
<dbReference type="KEGG" id="bsu:BSU15770"/>
<dbReference type="PATRIC" id="fig|224308.179.peg.1717"/>
<dbReference type="eggNOG" id="COG0515">
    <property type="taxonomic scope" value="Bacteria"/>
</dbReference>
<dbReference type="eggNOG" id="COG2815">
    <property type="taxonomic scope" value="Bacteria"/>
</dbReference>
<dbReference type="InParanoid" id="O34507"/>
<dbReference type="OrthoDB" id="9788659at2"/>
<dbReference type="PhylomeDB" id="O34507"/>
<dbReference type="BioCyc" id="BSUB:BSU15770-MONOMER"/>
<dbReference type="Proteomes" id="UP000001570">
    <property type="component" value="Chromosome"/>
</dbReference>
<dbReference type="GO" id="GO:0005886">
    <property type="term" value="C:plasma membrane"/>
    <property type="evidence" value="ECO:0000314"/>
    <property type="project" value="UniProtKB"/>
</dbReference>
<dbReference type="GO" id="GO:0005524">
    <property type="term" value="F:ATP binding"/>
    <property type="evidence" value="ECO:0007669"/>
    <property type="project" value="UniProtKB-KW"/>
</dbReference>
<dbReference type="GO" id="GO:0042834">
    <property type="term" value="F:peptidoglycan binding"/>
    <property type="evidence" value="ECO:0000314"/>
    <property type="project" value="UniProtKB"/>
</dbReference>
<dbReference type="GO" id="GO:0106310">
    <property type="term" value="F:protein serine kinase activity"/>
    <property type="evidence" value="ECO:0007669"/>
    <property type="project" value="RHEA"/>
</dbReference>
<dbReference type="GO" id="GO:0004674">
    <property type="term" value="F:protein serine/threonine kinase activity"/>
    <property type="evidence" value="ECO:0000314"/>
    <property type="project" value="UniProtKB"/>
</dbReference>
<dbReference type="GO" id="GO:0071224">
    <property type="term" value="P:cellular response to peptidoglycan"/>
    <property type="evidence" value="ECO:0000315"/>
    <property type="project" value="UniProtKB"/>
</dbReference>
<dbReference type="GO" id="GO:0006468">
    <property type="term" value="P:protein phosphorylation"/>
    <property type="evidence" value="ECO:0000314"/>
    <property type="project" value="UniProtKB"/>
</dbReference>
<dbReference type="GO" id="GO:0007165">
    <property type="term" value="P:signal transduction"/>
    <property type="evidence" value="ECO:0000315"/>
    <property type="project" value="UniProtKB"/>
</dbReference>
<dbReference type="GO" id="GO:0009847">
    <property type="term" value="P:spore germination"/>
    <property type="evidence" value="ECO:0000315"/>
    <property type="project" value="UniProtKB"/>
</dbReference>
<dbReference type="CDD" id="cd06577">
    <property type="entry name" value="PASTA_pknB"/>
    <property type="match status" value="3"/>
</dbReference>
<dbReference type="CDD" id="cd14014">
    <property type="entry name" value="STKc_PknB_like"/>
    <property type="match status" value="1"/>
</dbReference>
<dbReference type="FunFam" id="1.10.510.10:FF:000021">
    <property type="entry name" value="Serine/threonine protein kinase"/>
    <property type="match status" value="1"/>
</dbReference>
<dbReference type="FunFam" id="3.30.200.20:FF:000035">
    <property type="entry name" value="Serine/threonine protein kinase Stk1"/>
    <property type="match status" value="1"/>
</dbReference>
<dbReference type="Gene3D" id="2.60.40.2560">
    <property type="match status" value="1"/>
</dbReference>
<dbReference type="Gene3D" id="3.30.10.20">
    <property type="match status" value="3"/>
</dbReference>
<dbReference type="Gene3D" id="3.30.200.20">
    <property type="entry name" value="Phosphorylase Kinase, domain 1"/>
    <property type="match status" value="1"/>
</dbReference>
<dbReference type="Gene3D" id="1.10.510.10">
    <property type="entry name" value="Transferase(Phosphotransferase) domain 1"/>
    <property type="match status" value="1"/>
</dbReference>
<dbReference type="InterPro" id="IPR011009">
    <property type="entry name" value="Kinase-like_dom_sf"/>
</dbReference>
<dbReference type="InterPro" id="IPR005543">
    <property type="entry name" value="PASTA_dom"/>
</dbReference>
<dbReference type="InterPro" id="IPR000719">
    <property type="entry name" value="Prot_kinase_dom"/>
</dbReference>
<dbReference type="InterPro" id="IPR017441">
    <property type="entry name" value="Protein_kinase_ATP_BS"/>
</dbReference>
<dbReference type="InterPro" id="IPR008271">
    <property type="entry name" value="Ser/Thr_kinase_AS"/>
</dbReference>
<dbReference type="NCBIfam" id="NF033483">
    <property type="entry name" value="PknB_PASTA_kin"/>
    <property type="match status" value="1"/>
</dbReference>
<dbReference type="PANTHER" id="PTHR43289">
    <property type="entry name" value="MITOGEN-ACTIVATED PROTEIN KINASE KINASE KINASE 20-RELATED"/>
    <property type="match status" value="1"/>
</dbReference>
<dbReference type="PANTHER" id="PTHR43289:SF34">
    <property type="entry name" value="SERINE_THREONINE-PROTEIN KINASE YBDM-RELATED"/>
    <property type="match status" value="1"/>
</dbReference>
<dbReference type="Pfam" id="PF03793">
    <property type="entry name" value="PASTA"/>
    <property type="match status" value="3"/>
</dbReference>
<dbReference type="Pfam" id="PF00069">
    <property type="entry name" value="Pkinase"/>
    <property type="match status" value="1"/>
</dbReference>
<dbReference type="Pfam" id="PF21160">
    <property type="entry name" value="PrkC-like_PASTA-like"/>
    <property type="match status" value="1"/>
</dbReference>
<dbReference type="SMART" id="SM00740">
    <property type="entry name" value="PASTA"/>
    <property type="match status" value="3"/>
</dbReference>
<dbReference type="SMART" id="SM00220">
    <property type="entry name" value="S_TKc"/>
    <property type="match status" value="1"/>
</dbReference>
<dbReference type="SUPFAM" id="SSF56112">
    <property type="entry name" value="Protein kinase-like (PK-like)"/>
    <property type="match status" value="1"/>
</dbReference>
<dbReference type="PROSITE" id="PS51178">
    <property type="entry name" value="PASTA"/>
    <property type="match status" value="3"/>
</dbReference>
<dbReference type="PROSITE" id="PS00107">
    <property type="entry name" value="PROTEIN_KINASE_ATP"/>
    <property type="match status" value="1"/>
</dbReference>
<dbReference type="PROSITE" id="PS50011">
    <property type="entry name" value="PROTEIN_KINASE_DOM"/>
    <property type="match status" value="1"/>
</dbReference>
<dbReference type="PROSITE" id="PS00108">
    <property type="entry name" value="PROTEIN_KINASE_ST"/>
    <property type="match status" value="1"/>
</dbReference>
<evidence type="ECO:0000255" key="1"/>
<evidence type="ECO:0000255" key="2">
    <source>
        <dbReference type="PROSITE-ProRule" id="PRU00159"/>
    </source>
</evidence>
<evidence type="ECO:0000255" key="3">
    <source>
        <dbReference type="PROSITE-ProRule" id="PRU00528"/>
    </source>
</evidence>
<evidence type="ECO:0000255" key="4">
    <source>
        <dbReference type="PROSITE-ProRule" id="PRU10027"/>
    </source>
</evidence>
<evidence type="ECO:0000269" key="5">
    <source>
    </source>
</evidence>
<evidence type="ECO:0000269" key="6">
    <source>
    </source>
</evidence>
<evidence type="ECO:0000269" key="7">
    <source>
    </source>
</evidence>
<evidence type="ECO:0000269" key="8">
    <source>
    </source>
</evidence>
<evidence type="ECO:0000269" key="9">
    <source>
    </source>
</evidence>
<evidence type="ECO:0000269" key="10">
    <source>
    </source>
</evidence>
<evidence type="ECO:0000305" key="11"/>
<proteinExistence type="evidence at protein level"/>